<dbReference type="EC" id="1.1.1.44"/>
<dbReference type="EMBL" id="D31631">
    <property type="protein sequence ID" value="BAA06504.1"/>
    <property type="molecule type" value="Genomic_DNA"/>
</dbReference>
<dbReference type="PIR" id="JC2306">
    <property type="entry name" value="JC2306"/>
</dbReference>
<dbReference type="SMR" id="P52207"/>
<dbReference type="UniPathway" id="UPA00115">
    <property type="reaction ID" value="UER00410"/>
</dbReference>
<dbReference type="GO" id="GO:0050661">
    <property type="term" value="F:NADP binding"/>
    <property type="evidence" value="ECO:0007669"/>
    <property type="project" value="InterPro"/>
</dbReference>
<dbReference type="GO" id="GO:0004616">
    <property type="term" value="F:phosphogluconate dehydrogenase (decarboxylating) activity"/>
    <property type="evidence" value="ECO:0007669"/>
    <property type="project" value="UniProtKB-EC"/>
</dbReference>
<dbReference type="GO" id="GO:0019521">
    <property type="term" value="P:D-gluconate metabolic process"/>
    <property type="evidence" value="ECO:0007669"/>
    <property type="project" value="UniProtKB-KW"/>
</dbReference>
<dbReference type="GO" id="GO:0016054">
    <property type="term" value="P:organic acid catabolic process"/>
    <property type="evidence" value="ECO:0007669"/>
    <property type="project" value="UniProtKB-ARBA"/>
</dbReference>
<dbReference type="GO" id="GO:0006098">
    <property type="term" value="P:pentose-phosphate shunt"/>
    <property type="evidence" value="ECO:0007669"/>
    <property type="project" value="UniProtKB-UniPathway"/>
</dbReference>
<dbReference type="FunFam" id="1.10.1040.10:FF:000002">
    <property type="entry name" value="6-phosphogluconate dehydrogenase, decarboxylating"/>
    <property type="match status" value="1"/>
</dbReference>
<dbReference type="FunFam" id="3.40.50.720:FF:000007">
    <property type="entry name" value="6-phosphogluconate dehydrogenase, decarboxylating"/>
    <property type="match status" value="1"/>
</dbReference>
<dbReference type="Gene3D" id="1.20.5.320">
    <property type="entry name" value="6-Phosphogluconate Dehydrogenase, domain 3"/>
    <property type="match status" value="1"/>
</dbReference>
<dbReference type="Gene3D" id="1.10.1040.10">
    <property type="entry name" value="N-(1-d-carboxylethyl)-l-norvaline Dehydrogenase, domain 2"/>
    <property type="match status" value="1"/>
</dbReference>
<dbReference type="Gene3D" id="3.40.50.720">
    <property type="entry name" value="NAD(P)-binding Rossmann-like Domain"/>
    <property type="match status" value="1"/>
</dbReference>
<dbReference type="InterPro" id="IPR008927">
    <property type="entry name" value="6-PGluconate_DH-like_C_sf"/>
</dbReference>
<dbReference type="InterPro" id="IPR013328">
    <property type="entry name" value="6PGD_dom2"/>
</dbReference>
<dbReference type="InterPro" id="IPR006114">
    <property type="entry name" value="6PGDH_C"/>
</dbReference>
<dbReference type="InterPro" id="IPR006113">
    <property type="entry name" value="6PGDH_Gnd/GntZ"/>
</dbReference>
<dbReference type="InterPro" id="IPR006115">
    <property type="entry name" value="6PGDH_NADP-bd"/>
</dbReference>
<dbReference type="InterPro" id="IPR006184">
    <property type="entry name" value="6PGdom_BS"/>
</dbReference>
<dbReference type="InterPro" id="IPR036291">
    <property type="entry name" value="NAD(P)-bd_dom_sf"/>
</dbReference>
<dbReference type="InterPro" id="IPR006183">
    <property type="entry name" value="Pgluconate_DH"/>
</dbReference>
<dbReference type="NCBIfam" id="TIGR00873">
    <property type="entry name" value="gnd"/>
    <property type="match status" value="1"/>
</dbReference>
<dbReference type="NCBIfam" id="NF006765">
    <property type="entry name" value="PRK09287.1"/>
    <property type="match status" value="1"/>
</dbReference>
<dbReference type="PANTHER" id="PTHR11811">
    <property type="entry name" value="6-PHOSPHOGLUCONATE DEHYDROGENASE"/>
    <property type="match status" value="1"/>
</dbReference>
<dbReference type="Pfam" id="PF00393">
    <property type="entry name" value="6PGD"/>
    <property type="match status" value="1"/>
</dbReference>
<dbReference type="Pfam" id="PF03446">
    <property type="entry name" value="NAD_binding_2"/>
    <property type="match status" value="1"/>
</dbReference>
<dbReference type="PIRSF" id="PIRSF000109">
    <property type="entry name" value="6PGD"/>
    <property type="match status" value="1"/>
</dbReference>
<dbReference type="PRINTS" id="PR00076">
    <property type="entry name" value="6PGDHDRGNASE"/>
</dbReference>
<dbReference type="SMART" id="SM01350">
    <property type="entry name" value="6PGD"/>
    <property type="match status" value="1"/>
</dbReference>
<dbReference type="SUPFAM" id="SSF48179">
    <property type="entry name" value="6-phosphogluconate dehydrogenase C-terminal domain-like"/>
    <property type="match status" value="1"/>
</dbReference>
<dbReference type="SUPFAM" id="SSF51735">
    <property type="entry name" value="NAD(P)-binding Rossmann-fold domains"/>
    <property type="match status" value="1"/>
</dbReference>
<dbReference type="PROSITE" id="PS00461">
    <property type="entry name" value="6PGD"/>
    <property type="match status" value="1"/>
</dbReference>
<gene>
    <name type="primary">gntZ</name>
</gene>
<organism>
    <name type="scientific">Bacillus licheniformis</name>
    <dbReference type="NCBI Taxonomy" id="1402"/>
    <lineage>
        <taxon>Bacteria</taxon>
        <taxon>Bacillati</taxon>
        <taxon>Bacillota</taxon>
        <taxon>Bacilli</taxon>
        <taxon>Bacillales</taxon>
        <taxon>Bacillaceae</taxon>
        <taxon>Bacillus</taxon>
    </lineage>
</organism>
<reference key="1">
    <citation type="journal article" date="1994" name="DNA Res.">
        <title>Nucleotide sequence and features of the Bacillus licheniformis gnt operon.</title>
        <authorList>
            <person name="Yoshida K."/>
            <person name="Seki S."/>
            <person name="Fujita Y."/>
        </authorList>
    </citation>
    <scope>NUCLEOTIDE SEQUENCE [GENOMIC DNA]</scope>
    <source>
        <strain>BGSC5A2</strain>
    </source>
</reference>
<proteinExistence type="inferred from homology"/>
<keyword id="KW-0311">Gluconate utilization</keyword>
<keyword id="KW-0521">NADP</keyword>
<keyword id="KW-0560">Oxidoreductase</keyword>
<keyword id="KW-0570">Pentose shunt</keyword>
<evidence type="ECO:0000250" key="1"/>
<evidence type="ECO:0000305" key="2"/>
<sequence>MRNTIGVIGLGVMGSNIALNMASKGEQVAVYNYTRDLTDQLVQKTGGQTVKPYYELEDFVQSLEKPRKIFLMVTAGKPVDSVIDSLVPLLEEGDVIMDGGNSHYEDTERRYDSLKAKGIGYLGIGISGGEVGALKGPSIMPGGDRDVYEKAAPILTKIAAQVEGDPCCVYIGPKGAGHFVKMVHNGIEYADMQLIAEAYTFLREKLLLPIDEIADIFDTWNQGELKSYLIEITAEILRKKDERTGAPLIDVILDKTGQKGTGKWTSLQAIDNGIPSSIITESLFARYLSSLKDERTAAENVLAGPETEERPLDQNVWIDRVRQALYMGKVCAYAQGFAQYKMTSDLNGWHLPLKDIALIFRGGCIIRAQFLNLISEVYDKQPDLSNLLVAPDFAEKLKEYQSGLRKVVCEGISSGISFPCLSTALSYYDGYRTGRSNANLLQAQANYFGAHTYERTDMEGVFHTDWY</sequence>
<feature type="chain" id="PRO_0000090025" description="6-phosphogluconate dehydrogenase, decarboxylating">
    <location>
        <begin position="1"/>
        <end position="467"/>
    </location>
</feature>
<feature type="active site" description="Proton acceptor" evidence="1">
    <location>
        <position position="181"/>
    </location>
</feature>
<feature type="active site" description="Proton donor" evidence="1">
    <location>
        <position position="188"/>
    </location>
</feature>
<feature type="binding site" evidence="1">
    <location>
        <begin position="9"/>
        <end position="14"/>
    </location>
    <ligand>
        <name>NADP(+)</name>
        <dbReference type="ChEBI" id="CHEBI:58349"/>
    </ligand>
</feature>
<feature type="binding site" evidence="1">
    <location>
        <begin position="32"/>
        <end position="34"/>
    </location>
    <ligand>
        <name>NADP(+)</name>
        <dbReference type="ChEBI" id="CHEBI:58349"/>
    </ligand>
</feature>
<feature type="binding site" evidence="1">
    <location>
        <begin position="73"/>
        <end position="75"/>
    </location>
    <ligand>
        <name>NADP(+)</name>
        <dbReference type="ChEBI" id="CHEBI:58349"/>
    </ligand>
</feature>
<feature type="binding site" evidence="1">
    <location>
        <position position="101"/>
    </location>
    <ligand>
        <name>NADP(+)</name>
        <dbReference type="ChEBI" id="CHEBI:58349"/>
    </ligand>
</feature>
<feature type="binding site" description="in other chain" evidence="1">
    <location>
        <position position="101"/>
    </location>
    <ligand>
        <name>substrate</name>
        <note>ligand shared between dimeric partners</note>
    </ligand>
</feature>
<feature type="binding site" description="in other chain" evidence="1">
    <location>
        <begin position="127"/>
        <end position="129"/>
    </location>
    <ligand>
        <name>substrate</name>
        <note>ligand shared between dimeric partners</note>
    </ligand>
</feature>
<feature type="binding site" description="in other chain" evidence="1">
    <location>
        <begin position="184"/>
        <end position="185"/>
    </location>
    <ligand>
        <name>substrate</name>
        <note>ligand shared between dimeric partners</note>
    </ligand>
</feature>
<feature type="binding site" description="in other chain" evidence="1">
    <location>
        <position position="189"/>
    </location>
    <ligand>
        <name>substrate</name>
        <note>ligand shared between dimeric partners</note>
    </ligand>
</feature>
<feature type="binding site" description="in other chain" evidence="1">
    <location>
        <position position="259"/>
    </location>
    <ligand>
        <name>substrate</name>
        <note>ligand shared between dimeric partners</note>
    </ligand>
</feature>
<feature type="binding site" description="in other chain" evidence="1">
    <location>
        <position position="286"/>
    </location>
    <ligand>
        <name>substrate</name>
        <note>ligand shared between dimeric partners</note>
    </ligand>
</feature>
<feature type="binding site" evidence="1">
    <location>
        <position position="451"/>
    </location>
    <ligand>
        <name>substrate</name>
        <note>ligand shared between dimeric partners</note>
    </ligand>
</feature>
<protein>
    <recommendedName>
        <fullName>6-phosphogluconate dehydrogenase, decarboxylating</fullName>
        <ecNumber>1.1.1.44</ecNumber>
    </recommendedName>
</protein>
<accession>P52207</accession>
<name>6PGD_BACLI</name>
<comment type="function">
    <text evidence="1">Catalyzes the oxidative decarboxylation of 6-phosphogluconate to ribulose 5-phosphate and CO(2), with concomitant reduction of NADP to NADPH.</text>
</comment>
<comment type="catalytic activity">
    <reaction>
        <text>6-phospho-D-gluconate + NADP(+) = D-ribulose 5-phosphate + CO2 + NADPH</text>
        <dbReference type="Rhea" id="RHEA:10116"/>
        <dbReference type="ChEBI" id="CHEBI:16526"/>
        <dbReference type="ChEBI" id="CHEBI:57783"/>
        <dbReference type="ChEBI" id="CHEBI:58121"/>
        <dbReference type="ChEBI" id="CHEBI:58349"/>
        <dbReference type="ChEBI" id="CHEBI:58759"/>
        <dbReference type="EC" id="1.1.1.44"/>
    </reaction>
</comment>
<comment type="pathway">
    <text>Carbohydrate degradation; pentose phosphate pathway; D-ribulose 5-phosphate from D-glucose 6-phosphate (oxidative stage): step 3/3.</text>
</comment>
<comment type="subunit">
    <text evidence="1">Homodimer.</text>
</comment>
<comment type="similarity">
    <text evidence="2">Belongs to the 6-phosphogluconate dehydrogenase family.</text>
</comment>